<dbReference type="EC" id="6.4.1.1"/>
<dbReference type="EMBL" id="AF097728">
    <property type="protein sequence ID" value="AAC69197.1"/>
    <property type="molecule type" value="mRNA"/>
</dbReference>
<dbReference type="SMR" id="O93918"/>
<dbReference type="VEuPathDB" id="FungiDB:ATEG_05433"/>
<dbReference type="OrthoDB" id="196847at2759"/>
<dbReference type="BioCyc" id="MetaCyc:MONOMER-13631"/>
<dbReference type="UniPathway" id="UPA00138"/>
<dbReference type="GO" id="GO:0005737">
    <property type="term" value="C:cytoplasm"/>
    <property type="evidence" value="ECO:0007669"/>
    <property type="project" value="UniProtKB-SubCell"/>
</dbReference>
<dbReference type="GO" id="GO:0005524">
    <property type="term" value="F:ATP binding"/>
    <property type="evidence" value="ECO:0007669"/>
    <property type="project" value="UniProtKB-KW"/>
</dbReference>
<dbReference type="GO" id="GO:0046872">
    <property type="term" value="F:metal ion binding"/>
    <property type="evidence" value="ECO:0007669"/>
    <property type="project" value="UniProtKB-KW"/>
</dbReference>
<dbReference type="GO" id="GO:0004736">
    <property type="term" value="F:pyruvate carboxylase activity"/>
    <property type="evidence" value="ECO:0007669"/>
    <property type="project" value="UniProtKB-EC"/>
</dbReference>
<dbReference type="GO" id="GO:0006094">
    <property type="term" value="P:gluconeogenesis"/>
    <property type="evidence" value="ECO:0007669"/>
    <property type="project" value="UniProtKB-UniPathway"/>
</dbReference>
<dbReference type="CDD" id="cd06850">
    <property type="entry name" value="biotinyl_domain"/>
    <property type="match status" value="1"/>
</dbReference>
<dbReference type="CDD" id="cd07937">
    <property type="entry name" value="DRE_TIM_PC_TC_5S"/>
    <property type="match status" value="1"/>
</dbReference>
<dbReference type="FunFam" id="2.40.50.100:FF:000003">
    <property type="entry name" value="Acetyl-CoA carboxylase biotin carboxyl carrier protein"/>
    <property type="match status" value="1"/>
</dbReference>
<dbReference type="FunFam" id="3.30.1490.20:FF:000018">
    <property type="entry name" value="Biotin carboxylase"/>
    <property type="match status" value="1"/>
</dbReference>
<dbReference type="FunFam" id="3.40.50.20:FF:000010">
    <property type="entry name" value="Propionyl-CoA carboxylase subunit alpha"/>
    <property type="match status" value="1"/>
</dbReference>
<dbReference type="FunFam" id="3.10.600.10:FF:000002">
    <property type="entry name" value="Pyruvate carboxylase"/>
    <property type="match status" value="1"/>
</dbReference>
<dbReference type="FunFam" id="3.20.20.70:FF:000033">
    <property type="entry name" value="Pyruvate carboxylase"/>
    <property type="match status" value="1"/>
</dbReference>
<dbReference type="FunFam" id="3.30.470.20:FF:000012">
    <property type="entry name" value="Pyruvate carboxylase"/>
    <property type="match status" value="1"/>
</dbReference>
<dbReference type="Gene3D" id="2.40.50.100">
    <property type="match status" value="1"/>
</dbReference>
<dbReference type="Gene3D" id="3.20.20.70">
    <property type="entry name" value="Aldolase class I"/>
    <property type="match status" value="1"/>
</dbReference>
<dbReference type="Gene3D" id="3.30.470.20">
    <property type="entry name" value="ATP-grasp fold, B domain"/>
    <property type="match status" value="1"/>
</dbReference>
<dbReference type="Gene3D" id="3.10.600.10">
    <property type="entry name" value="pyruvate carboxylase f1077a mutant domain"/>
    <property type="match status" value="1"/>
</dbReference>
<dbReference type="InterPro" id="IPR013785">
    <property type="entry name" value="Aldolase_TIM"/>
</dbReference>
<dbReference type="InterPro" id="IPR011761">
    <property type="entry name" value="ATP-grasp"/>
</dbReference>
<dbReference type="InterPro" id="IPR005481">
    <property type="entry name" value="BC-like_N"/>
</dbReference>
<dbReference type="InterPro" id="IPR001882">
    <property type="entry name" value="Biotin_BS"/>
</dbReference>
<dbReference type="InterPro" id="IPR011764">
    <property type="entry name" value="Biotin_carboxylation_dom"/>
</dbReference>
<dbReference type="InterPro" id="IPR005482">
    <property type="entry name" value="Biotin_COase_C"/>
</dbReference>
<dbReference type="InterPro" id="IPR000089">
    <property type="entry name" value="Biotin_lipoyl"/>
</dbReference>
<dbReference type="InterPro" id="IPR003379">
    <property type="entry name" value="Carboxylase_cons_dom"/>
</dbReference>
<dbReference type="InterPro" id="IPR005479">
    <property type="entry name" value="CbamoylP_synth_lsu-like_ATP-bd"/>
</dbReference>
<dbReference type="InterPro" id="IPR055268">
    <property type="entry name" value="PCB-like"/>
</dbReference>
<dbReference type="InterPro" id="IPR016185">
    <property type="entry name" value="PreATP-grasp_dom_sf"/>
</dbReference>
<dbReference type="InterPro" id="IPR000891">
    <property type="entry name" value="PYR_CT"/>
</dbReference>
<dbReference type="InterPro" id="IPR005930">
    <property type="entry name" value="Pyruv_COase"/>
</dbReference>
<dbReference type="InterPro" id="IPR011054">
    <property type="entry name" value="Rudment_hybrid_motif"/>
</dbReference>
<dbReference type="InterPro" id="IPR011053">
    <property type="entry name" value="Single_hybrid_motif"/>
</dbReference>
<dbReference type="NCBIfam" id="NF006761">
    <property type="entry name" value="PRK09282.1"/>
    <property type="match status" value="1"/>
</dbReference>
<dbReference type="NCBIfam" id="NF009554">
    <property type="entry name" value="PRK12999.1"/>
    <property type="match status" value="1"/>
</dbReference>
<dbReference type="NCBIfam" id="TIGR01235">
    <property type="entry name" value="pyruv_carbox"/>
    <property type="match status" value="1"/>
</dbReference>
<dbReference type="PANTHER" id="PTHR43778">
    <property type="entry name" value="PYRUVATE CARBOXYLASE"/>
    <property type="match status" value="1"/>
</dbReference>
<dbReference type="PANTHER" id="PTHR43778:SF2">
    <property type="entry name" value="PYRUVATE CARBOXYLASE, MITOCHONDRIAL"/>
    <property type="match status" value="1"/>
</dbReference>
<dbReference type="Pfam" id="PF02785">
    <property type="entry name" value="Biotin_carb_C"/>
    <property type="match status" value="1"/>
</dbReference>
<dbReference type="Pfam" id="PF00289">
    <property type="entry name" value="Biotin_carb_N"/>
    <property type="match status" value="1"/>
</dbReference>
<dbReference type="Pfam" id="PF00364">
    <property type="entry name" value="Biotin_lipoyl"/>
    <property type="match status" value="1"/>
</dbReference>
<dbReference type="Pfam" id="PF02786">
    <property type="entry name" value="CPSase_L_D2"/>
    <property type="match status" value="1"/>
</dbReference>
<dbReference type="Pfam" id="PF00682">
    <property type="entry name" value="HMGL-like"/>
    <property type="match status" value="1"/>
</dbReference>
<dbReference type="Pfam" id="PF02436">
    <property type="entry name" value="PYC_OADA"/>
    <property type="match status" value="1"/>
</dbReference>
<dbReference type="PIRSF" id="PIRSF001594">
    <property type="entry name" value="Pyruv_carbox"/>
    <property type="match status" value="1"/>
</dbReference>
<dbReference type="SMART" id="SM00878">
    <property type="entry name" value="Biotin_carb_C"/>
    <property type="match status" value="1"/>
</dbReference>
<dbReference type="SUPFAM" id="SSF51569">
    <property type="entry name" value="Aldolase"/>
    <property type="match status" value="1"/>
</dbReference>
<dbReference type="SUPFAM" id="SSF56059">
    <property type="entry name" value="Glutathione synthetase ATP-binding domain-like"/>
    <property type="match status" value="1"/>
</dbReference>
<dbReference type="SUPFAM" id="SSF89000">
    <property type="entry name" value="post-HMGL domain-like"/>
    <property type="match status" value="1"/>
</dbReference>
<dbReference type="SUPFAM" id="SSF52440">
    <property type="entry name" value="PreATP-grasp domain"/>
    <property type="match status" value="1"/>
</dbReference>
<dbReference type="SUPFAM" id="SSF51246">
    <property type="entry name" value="Rudiment single hybrid motif"/>
    <property type="match status" value="1"/>
</dbReference>
<dbReference type="SUPFAM" id="SSF51230">
    <property type="entry name" value="Single hybrid motif"/>
    <property type="match status" value="1"/>
</dbReference>
<dbReference type="PROSITE" id="PS50975">
    <property type="entry name" value="ATP_GRASP"/>
    <property type="match status" value="1"/>
</dbReference>
<dbReference type="PROSITE" id="PS50979">
    <property type="entry name" value="BC"/>
    <property type="match status" value="1"/>
</dbReference>
<dbReference type="PROSITE" id="PS00188">
    <property type="entry name" value="BIOTIN"/>
    <property type="match status" value="1"/>
</dbReference>
<dbReference type="PROSITE" id="PS50968">
    <property type="entry name" value="BIOTINYL_LIPOYL"/>
    <property type="match status" value="1"/>
</dbReference>
<dbReference type="PROSITE" id="PS00866">
    <property type="entry name" value="CPSASE_1"/>
    <property type="match status" value="1"/>
</dbReference>
<dbReference type="PROSITE" id="PS00867">
    <property type="entry name" value="CPSASE_2"/>
    <property type="match status" value="1"/>
</dbReference>
<dbReference type="PROSITE" id="PS50991">
    <property type="entry name" value="PYR_CT"/>
    <property type="match status" value="1"/>
</dbReference>
<keyword id="KW-0067">ATP-binding</keyword>
<keyword id="KW-0092">Biotin</keyword>
<keyword id="KW-0963">Cytoplasm</keyword>
<keyword id="KW-0312">Gluconeogenesis</keyword>
<keyword id="KW-0436">Ligase</keyword>
<keyword id="KW-0479">Metal-binding</keyword>
<keyword id="KW-0511">Multifunctional enzyme</keyword>
<keyword id="KW-0547">Nucleotide-binding</keyword>
<keyword id="KW-0670">Pyruvate</keyword>
<keyword id="KW-0862">Zinc</keyword>
<name>PYC_ASPTE</name>
<organism>
    <name type="scientific">Aspergillus terreus</name>
    <dbReference type="NCBI Taxonomy" id="33178"/>
    <lineage>
        <taxon>Eukaryota</taxon>
        <taxon>Fungi</taxon>
        <taxon>Dikarya</taxon>
        <taxon>Ascomycota</taxon>
        <taxon>Pezizomycotina</taxon>
        <taxon>Eurotiomycetes</taxon>
        <taxon>Eurotiomycetidae</taxon>
        <taxon>Eurotiales</taxon>
        <taxon>Aspergillaceae</taxon>
        <taxon>Aspergillus</taxon>
        <taxon>Aspergillus subgen. Circumdati</taxon>
    </lineage>
</organism>
<gene>
    <name type="primary">pyc</name>
</gene>
<protein>
    <recommendedName>
        <fullName>Pyruvate carboxylase</fullName>
        <ecNumber>6.4.1.1</ecNumber>
    </recommendedName>
    <alternativeName>
        <fullName>Pyruvic carboxylase</fullName>
        <shortName>PCB</shortName>
    </alternativeName>
</protein>
<comment type="function">
    <text evidence="1">Pyruvate carboxylase catalyzes a 2-step reaction, involving the ATP-dependent carboxylation of the covalently attached biotin in the first step and the transfer of the carboxyl group to pyruvate in the second.</text>
</comment>
<comment type="catalytic activity">
    <reaction>
        <text>hydrogencarbonate + pyruvate + ATP = oxaloacetate + ADP + phosphate + H(+)</text>
        <dbReference type="Rhea" id="RHEA:20844"/>
        <dbReference type="ChEBI" id="CHEBI:15361"/>
        <dbReference type="ChEBI" id="CHEBI:15378"/>
        <dbReference type="ChEBI" id="CHEBI:16452"/>
        <dbReference type="ChEBI" id="CHEBI:17544"/>
        <dbReference type="ChEBI" id="CHEBI:30616"/>
        <dbReference type="ChEBI" id="CHEBI:43474"/>
        <dbReference type="ChEBI" id="CHEBI:456216"/>
        <dbReference type="EC" id="6.4.1.1"/>
    </reaction>
</comment>
<comment type="cofactor">
    <cofactor evidence="1">
        <name>biotin</name>
        <dbReference type="ChEBI" id="CHEBI:57586"/>
    </cofactor>
</comment>
<comment type="cofactor">
    <cofactor evidence="1">
        <name>Zn(2+)</name>
        <dbReference type="ChEBI" id="CHEBI:29105"/>
    </cofactor>
</comment>
<comment type="pathway">
    <text>Carbohydrate biosynthesis; gluconeogenesis.</text>
</comment>
<comment type="subcellular location">
    <subcellularLocation>
        <location evidence="1">Cytoplasm</location>
    </subcellularLocation>
</comment>
<feature type="chain" id="PRO_0000146820" description="Pyruvate carboxylase">
    <location>
        <begin position="1"/>
        <end position="1193"/>
    </location>
</feature>
<feature type="domain" description="Biotin carboxylation">
    <location>
        <begin position="41"/>
        <end position="493"/>
    </location>
</feature>
<feature type="domain" description="ATP-grasp" evidence="2">
    <location>
        <begin position="163"/>
        <end position="360"/>
    </location>
</feature>
<feature type="domain" description="Pyruvate carboxyltransferase" evidence="4">
    <location>
        <begin position="579"/>
        <end position="847"/>
    </location>
</feature>
<feature type="domain" description="Biotinyl-binding" evidence="3">
    <location>
        <begin position="1116"/>
        <end position="1191"/>
    </location>
</feature>
<feature type="active site" evidence="1">
    <location>
        <position position="335"/>
    </location>
</feature>
<feature type="binding site" evidence="1">
    <location>
        <position position="159"/>
    </location>
    <ligand>
        <name>ATP</name>
        <dbReference type="ChEBI" id="CHEBI:30616"/>
    </ligand>
</feature>
<feature type="binding site" evidence="1">
    <location>
        <position position="243"/>
    </location>
    <ligand>
        <name>ATP</name>
        <dbReference type="ChEBI" id="CHEBI:30616"/>
    </ligand>
</feature>
<feature type="binding site" evidence="1">
    <location>
        <position position="278"/>
    </location>
    <ligand>
        <name>ATP</name>
        <dbReference type="ChEBI" id="CHEBI:30616"/>
    </ligand>
</feature>
<feature type="binding site" evidence="1">
    <location>
        <begin position="587"/>
        <end position="591"/>
    </location>
    <ligand>
        <name>substrate</name>
    </ligand>
</feature>
<feature type="binding site" evidence="1">
    <location>
        <position position="588"/>
    </location>
    <ligand>
        <name>a divalent metal cation</name>
        <dbReference type="ChEBI" id="CHEBI:60240"/>
    </ligand>
</feature>
<feature type="binding site" evidence="1">
    <location>
        <position position="660"/>
    </location>
    <ligand>
        <name>substrate</name>
    </ligand>
</feature>
<feature type="binding site" description="via carbamate group" evidence="1">
    <location>
        <position position="756"/>
    </location>
    <ligand>
        <name>a divalent metal cation</name>
        <dbReference type="ChEBI" id="CHEBI:60240"/>
    </ligand>
</feature>
<feature type="binding site" evidence="1">
    <location>
        <position position="786"/>
    </location>
    <ligand>
        <name>a divalent metal cation</name>
        <dbReference type="ChEBI" id="CHEBI:60240"/>
    </ligand>
</feature>
<feature type="binding site" evidence="1">
    <location>
        <position position="788"/>
    </location>
    <ligand>
        <name>a divalent metal cation</name>
        <dbReference type="ChEBI" id="CHEBI:60240"/>
    </ligand>
</feature>
<feature type="binding site" evidence="1">
    <location>
        <position position="921"/>
    </location>
    <ligand>
        <name>substrate</name>
    </ligand>
</feature>
<feature type="modified residue" description="N6-carboxylysine" evidence="1">
    <location>
        <position position="756"/>
    </location>
</feature>
<feature type="modified residue" description="N6-biotinyllysine" evidence="1 3">
    <location>
        <position position="1157"/>
    </location>
</feature>
<reference key="1">
    <citation type="submission" date="1998-10" db="EMBL/GenBank/DDBJ databases">
        <title>Cloning and sequencing of the cDNA encoding pyruvate carboxylase from Aspergillus terreus.</title>
        <authorList>
            <person name="Li Y.F."/>
            <person name="Chen M.C."/>
            <person name="Lin Y.H."/>
            <person name="Hsu C.C."/>
            <person name="Tsai Y.C."/>
        </authorList>
    </citation>
    <scope>NUCLEOTIDE SEQUENCE [MRNA]</scope>
</reference>
<proteinExistence type="evidence at transcript level"/>
<sequence length="1193" mass="131222">MAAPYRQPEEAVDDSEFIDDHHDHLRDTVHHRLRANSAIMQFQKILVANRGEIPIRIFRTAHELSLQTVAIFSHEDRLSMHRQKADEAYMIGHRGQYTPVGAYLAADEIVKIALEHGVHLIHPGYGFLSENADFARKVEKAGMVFVGPTPDTIDSLGDKVSARQLAIRCNVPVVPGTEGPVERYEEVKAFTDTYGFPIIIKAAFGGGGRGMRVVRNQADLRDSFERATSEARSAFGNGTVFVERFLDKPKHIEVQLLGDNHGNVVHLFERDCSVQRRHQKVVEVAPAKDLPTDVRDRILSDAVKLAKSVNYRNAGTAEFLVDQQNRHYFIEINPRIQVEHTITEEITGIDIVAAQIQIAAGATLEQLGLTQDRISTRGFAIQCRITTEDPSKGFSPDTGKIEVYRSAGGNGVRLDGGNGFAGAIITPHYDSMLVKCTCRGSTYEIARRKVVRALVEFRIRGVKTNIPFLTSLLSHPTFVDGNCWTTFIDDTPELFALVGSQNRAQKLLAYLGDVAVNGSSIKGQMGEPKFKGEIIKPKLLDAQGKPLDVSQPCTKGWKQIIDQEGPVAFAKAVRANKGCLIMDTTWRDAHQSLLATRVRTIDLLNIAHETSHALSNAYSLECWGGATFDVAMRFLYEDPWDRLRKMRKAVPNIPFQMLLRGANGVAYSSLPDNAIYHFCKNAKKCGVDIFRVFDALNDIDQLEVGIKAVHAAEGVVEATVCYSGDMLNPKKKYNLEYYLALVDKIVALKPHVLGIKDMAGVLKPQAARLLVGSIRERYPDLPIHVHTHDSAGTGVASMIACAQAGADAVDAATDSMSGMTSQPSIGAILASLEGTEHDPGLNSAHVRALDSYWAQLRLLYSPFEANLTGPDPEVYEHEIPGGQLTNLIFQASQLGLGQQWAETKKAYEVANDLLGDIVKVTPTSKVVGDLAQFIVSNKLSAQDVVDRAAELDFPGSVLEFLEGLMGQPFGGFPEPLRSRALRNRRKLDKRPGLYLEPLDLAAIKNQIREQFGSATEYDVASYAMYPKVFEDYKKFVQKYGDLSVLPTRYFLAKPEIGEEFHVELEKGKVLILKLLAIGPLSEQTGQREVFYEVNGEVRQVSIDDKKASIDNTARPKADVGDSSQVGAPMSGVVVEIRVHDGLEVKKGDPLAVLSAMKMEMVISAPHSGKVSGLLVKEGDSVDGQDLVCKITKA</sequence>
<evidence type="ECO:0000250" key="1"/>
<evidence type="ECO:0000255" key="2">
    <source>
        <dbReference type="PROSITE-ProRule" id="PRU00409"/>
    </source>
</evidence>
<evidence type="ECO:0000255" key="3">
    <source>
        <dbReference type="PROSITE-ProRule" id="PRU01066"/>
    </source>
</evidence>
<evidence type="ECO:0000255" key="4">
    <source>
        <dbReference type="PROSITE-ProRule" id="PRU01151"/>
    </source>
</evidence>
<accession>O93918</accession>